<keyword id="KW-0067">ATP-binding</keyword>
<keyword id="KW-0418">Kinase</keyword>
<keyword id="KW-0460">Magnesium</keyword>
<keyword id="KW-0479">Metal-binding</keyword>
<keyword id="KW-0547">Nucleotide-binding</keyword>
<keyword id="KW-0808">Transferase</keyword>
<evidence type="ECO:0000255" key="1">
    <source>
        <dbReference type="HAMAP-Rule" id="MF_01881"/>
    </source>
</evidence>
<sequence length="402" mass="43689">MNEFPVVLVINCGSSSIKFSVLDVATCDVLMAGIADGMNTENAFLSINGDKPINLAHSNYEDALKAIAFELEKRDLTDSVALIGHRIAHGGELFTQSVIITDEIIDNIRRVSPLAPLHNYANLSGIDAARHLFPAVRQVAVFDTSFHQTLAPEAYLYGLPWEYFSSLGVRRYGFHGTSHRYVSRRAYELLDLDEKNSGLIVAHLGNGASICAVRNGQSVDTSMGMTPLEGLMMGTRSGDVDFGAMAWIAKETGQTLSDLERVVNKESGLLGISGLSSDLRVLEKAWHEGHERARLAIKTFVHRIARHIAGHAASLHRLDGIIFTGGIGENSVLIRQLAIEHLGVLGLTLDVEMNKQPNSHGERIISANPSQVICAVIPTNEEKMIALDAIHLGNVKAPVEFA</sequence>
<feature type="chain" id="PRO_0000398208" description="Propionate kinase">
    <location>
        <begin position="1"/>
        <end position="402"/>
    </location>
</feature>
<feature type="active site" description="Proton donor/acceptor" evidence="1">
    <location>
        <position position="143"/>
    </location>
</feature>
<feature type="binding site" evidence="1">
    <location>
        <position position="11"/>
    </location>
    <ligand>
        <name>ATP</name>
        <dbReference type="ChEBI" id="CHEBI:30616"/>
    </ligand>
</feature>
<feature type="binding site" evidence="1">
    <location>
        <position position="11"/>
    </location>
    <ligand>
        <name>Mg(2+)</name>
        <dbReference type="ChEBI" id="CHEBI:18420"/>
    </ligand>
</feature>
<feature type="binding site" evidence="1">
    <location>
        <position position="18"/>
    </location>
    <ligand>
        <name>ATP</name>
        <dbReference type="ChEBI" id="CHEBI:30616"/>
    </ligand>
</feature>
<feature type="binding site" evidence="1">
    <location>
        <position position="86"/>
    </location>
    <ligand>
        <name>substrate</name>
    </ligand>
</feature>
<feature type="binding site" evidence="1">
    <location>
        <position position="175"/>
    </location>
    <ligand>
        <name>ATP</name>
        <dbReference type="ChEBI" id="CHEBI:30616"/>
    </ligand>
</feature>
<feature type="binding site" evidence="1">
    <location>
        <begin position="203"/>
        <end position="207"/>
    </location>
    <ligand>
        <name>ATP</name>
        <dbReference type="ChEBI" id="CHEBI:30616"/>
    </ligand>
</feature>
<feature type="binding site" evidence="1">
    <location>
        <begin position="278"/>
        <end position="280"/>
    </location>
    <ligand>
        <name>ATP</name>
        <dbReference type="ChEBI" id="CHEBI:30616"/>
    </ligand>
</feature>
<feature type="binding site" evidence="1">
    <location>
        <begin position="326"/>
        <end position="330"/>
    </location>
    <ligand>
        <name>ATP</name>
        <dbReference type="ChEBI" id="CHEBI:30616"/>
    </ligand>
</feature>
<feature type="site" description="Transition state stabilizer" evidence="1">
    <location>
        <position position="175"/>
    </location>
</feature>
<feature type="site" description="Transition state stabilizer" evidence="1">
    <location>
        <position position="236"/>
    </location>
</feature>
<gene>
    <name evidence="1" type="primary">tdcD</name>
    <name type="ordered locus">SeAg_B3430</name>
</gene>
<accession>B5F6P9</accession>
<comment type="function">
    <text evidence="1">Catalyzes the conversion of propionyl phosphate and ADP to propionate and ATP.</text>
</comment>
<comment type="catalytic activity">
    <reaction evidence="1">
        <text>propanoate + ATP = propanoyl phosphate + ADP</text>
        <dbReference type="Rhea" id="RHEA:23148"/>
        <dbReference type="ChEBI" id="CHEBI:17272"/>
        <dbReference type="ChEBI" id="CHEBI:30616"/>
        <dbReference type="ChEBI" id="CHEBI:58933"/>
        <dbReference type="ChEBI" id="CHEBI:456216"/>
        <dbReference type="EC" id="2.7.2.15"/>
    </reaction>
</comment>
<comment type="cofactor">
    <cofactor evidence="1">
        <name>Mg(2+)</name>
        <dbReference type="ChEBI" id="CHEBI:18420"/>
    </cofactor>
</comment>
<comment type="pathway">
    <text evidence="1">Amino-acid degradation; L-threonine degradation via propanoate pathway; propanoate from L-threonine: step 4/4.</text>
</comment>
<comment type="subunit">
    <text evidence="1">Homodimer.</text>
</comment>
<comment type="similarity">
    <text evidence="1">Belongs to the acetokinase family. TdcD subfamily.</text>
</comment>
<name>TDCD_SALA4</name>
<proteinExistence type="inferred from homology"/>
<reference key="1">
    <citation type="journal article" date="2011" name="J. Bacteriol.">
        <title>Comparative genomics of 28 Salmonella enterica isolates: evidence for CRISPR-mediated adaptive sublineage evolution.</title>
        <authorList>
            <person name="Fricke W.F."/>
            <person name="Mammel M.K."/>
            <person name="McDermott P.F."/>
            <person name="Tartera C."/>
            <person name="White D.G."/>
            <person name="Leclerc J.E."/>
            <person name="Ravel J."/>
            <person name="Cebula T.A."/>
        </authorList>
    </citation>
    <scope>NUCLEOTIDE SEQUENCE [LARGE SCALE GENOMIC DNA]</scope>
    <source>
        <strain>SL483</strain>
    </source>
</reference>
<dbReference type="EC" id="2.7.2.15" evidence="1"/>
<dbReference type="EMBL" id="CP001138">
    <property type="protein sequence ID" value="ACH48886.1"/>
    <property type="molecule type" value="Genomic_DNA"/>
</dbReference>
<dbReference type="RefSeq" id="WP_001001854.1">
    <property type="nucleotide sequence ID" value="NC_011149.1"/>
</dbReference>
<dbReference type="SMR" id="B5F6P9"/>
<dbReference type="KEGG" id="sea:SeAg_B3430"/>
<dbReference type="HOGENOM" id="CLU_020352_0_1_6"/>
<dbReference type="UniPathway" id="UPA00052">
    <property type="reaction ID" value="UER00510"/>
</dbReference>
<dbReference type="Proteomes" id="UP000008819">
    <property type="component" value="Chromosome"/>
</dbReference>
<dbReference type="GO" id="GO:0005829">
    <property type="term" value="C:cytosol"/>
    <property type="evidence" value="ECO:0007669"/>
    <property type="project" value="TreeGrafter"/>
</dbReference>
<dbReference type="GO" id="GO:0008776">
    <property type="term" value="F:acetate kinase activity"/>
    <property type="evidence" value="ECO:0007669"/>
    <property type="project" value="TreeGrafter"/>
</dbReference>
<dbReference type="GO" id="GO:0005524">
    <property type="term" value="F:ATP binding"/>
    <property type="evidence" value="ECO:0007669"/>
    <property type="project" value="UniProtKB-KW"/>
</dbReference>
<dbReference type="GO" id="GO:0046872">
    <property type="term" value="F:metal ion binding"/>
    <property type="evidence" value="ECO:0007669"/>
    <property type="project" value="UniProtKB-KW"/>
</dbReference>
<dbReference type="GO" id="GO:0008980">
    <property type="term" value="F:propionate kinase activity"/>
    <property type="evidence" value="ECO:0007669"/>
    <property type="project" value="UniProtKB-UniRule"/>
</dbReference>
<dbReference type="GO" id="GO:0006083">
    <property type="term" value="P:acetate metabolic process"/>
    <property type="evidence" value="ECO:0007669"/>
    <property type="project" value="TreeGrafter"/>
</dbReference>
<dbReference type="GO" id="GO:0070689">
    <property type="term" value="P:L-threonine catabolic process to propionate"/>
    <property type="evidence" value="ECO:0007669"/>
    <property type="project" value="UniProtKB-UniRule"/>
</dbReference>
<dbReference type="CDD" id="cd24010">
    <property type="entry name" value="ASKHA_NBD_AcK_PK"/>
    <property type="match status" value="1"/>
</dbReference>
<dbReference type="Gene3D" id="3.30.420.40">
    <property type="match status" value="2"/>
</dbReference>
<dbReference type="HAMAP" id="MF_00020">
    <property type="entry name" value="Acetate_kinase"/>
    <property type="match status" value="1"/>
</dbReference>
<dbReference type="HAMAP" id="MF_01881">
    <property type="entry name" value="Propion_kin_subfam1"/>
    <property type="match status" value="1"/>
</dbReference>
<dbReference type="InterPro" id="IPR004372">
    <property type="entry name" value="Ac/propionate_kinase"/>
</dbReference>
<dbReference type="InterPro" id="IPR000890">
    <property type="entry name" value="Aliphatic_acid_kin_short-chain"/>
</dbReference>
<dbReference type="InterPro" id="IPR023865">
    <property type="entry name" value="Aliphatic_acid_kinase_CS"/>
</dbReference>
<dbReference type="InterPro" id="IPR043129">
    <property type="entry name" value="ATPase_NBD"/>
</dbReference>
<dbReference type="InterPro" id="IPR024917">
    <property type="entry name" value="Propionate_kinase"/>
</dbReference>
<dbReference type="NCBIfam" id="TIGR00016">
    <property type="entry name" value="ackA"/>
    <property type="match status" value="1"/>
</dbReference>
<dbReference type="NCBIfam" id="NF009045">
    <property type="entry name" value="PRK12379.1"/>
    <property type="match status" value="1"/>
</dbReference>
<dbReference type="PANTHER" id="PTHR21060">
    <property type="entry name" value="ACETATE KINASE"/>
    <property type="match status" value="1"/>
</dbReference>
<dbReference type="PANTHER" id="PTHR21060:SF17">
    <property type="entry name" value="PROPIONATE KINASE"/>
    <property type="match status" value="1"/>
</dbReference>
<dbReference type="Pfam" id="PF00871">
    <property type="entry name" value="Acetate_kinase"/>
    <property type="match status" value="1"/>
</dbReference>
<dbReference type="PIRSF" id="PIRSF000722">
    <property type="entry name" value="Acetate_prop_kin"/>
    <property type="match status" value="1"/>
</dbReference>
<dbReference type="PRINTS" id="PR00471">
    <property type="entry name" value="ACETATEKNASE"/>
</dbReference>
<dbReference type="SUPFAM" id="SSF53067">
    <property type="entry name" value="Actin-like ATPase domain"/>
    <property type="match status" value="2"/>
</dbReference>
<dbReference type="PROSITE" id="PS01075">
    <property type="entry name" value="ACETATE_KINASE_1"/>
    <property type="match status" value="1"/>
</dbReference>
<dbReference type="PROSITE" id="PS01076">
    <property type="entry name" value="ACETATE_KINASE_2"/>
    <property type="match status" value="1"/>
</dbReference>
<protein>
    <recommendedName>
        <fullName evidence="1">Propionate kinase</fullName>
        <ecNumber evidence="1">2.7.2.15</ecNumber>
    </recommendedName>
</protein>
<organism>
    <name type="scientific">Salmonella agona (strain SL483)</name>
    <dbReference type="NCBI Taxonomy" id="454166"/>
    <lineage>
        <taxon>Bacteria</taxon>
        <taxon>Pseudomonadati</taxon>
        <taxon>Pseudomonadota</taxon>
        <taxon>Gammaproteobacteria</taxon>
        <taxon>Enterobacterales</taxon>
        <taxon>Enterobacteriaceae</taxon>
        <taxon>Salmonella</taxon>
    </lineage>
</organism>